<organism>
    <name type="scientific">Pseudomonas fluorescens biotype A</name>
    <dbReference type="NCBI Taxonomy" id="32035"/>
    <lineage>
        <taxon>Bacteria</taxon>
        <taxon>Pseudomonadati</taxon>
        <taxon>Pseudomonadota</taxon>
        <taxon>Gammaproteobacteria</taxon>
        <taxon>Pseudomonadales</taxon>
        <taxon>Pseudomonadaceae</taxon>
        <taxon>Pseudomonas</taxon>
    </lineage>
</organism>
<dbReference type="EC" id="2.1.3.2" evidence="1"/>
<dbReference type="EMBL" id="AY007523">
    <property type="protein sequence ID" value="AAG15558.1"/>
    <property type="molecule type" value="Genomic_DNA"/>
</dbReference>
<dbReference type="SMR" id="P56585"/>
<dbReference type="UniPathway" id="UPA00070">
    <property type="reaction ID" value="UER00116"/>
</dbReference>
<dbReference type="GO" id="GO:0005829">
    <property type="term" value="C:cytosol"/>
    <property type="evidence" value="ECO:0007669"/>
    <property type="project" value="TreeGrafter"/>
</dbReference>
<dbReference type="GO" id="GO:0016597">
    <property type="term" value="F:amino acid binding"/>
    <property type="evidence" value="ECO:0007669"/>
    <property type="project" value="InterPro"/>
</dbReference>
<dbReference type="GO" id="GO:0004070">
    <property type="term" value="F:aspartate carbamoyltransferase activity"/>
    <property type="evidence" value="ECO:0007669"/>
    <property type="project" value="UniProtKB-UniRule"/>
</dbReference>
<dbReference type="GO" id="GO:0006207">
    <property type="term" value="P:'de novo' pyrimidine nucleobase biosynthetic process"/>
    <property type="evidence" value="ECO:0007669"/>
    <property type="project" value="InterPro"/>
</dbReference>
<dbReference type="GO" id="GO:0044205">
    <property type="term" value="P:'de novo' UMP biosynthetic process"/>
    <property type="evidence" value="ECO:0007669"/>
    <property type="project" value="UniProtKB-UniRule"/>
</dbReference>
<dbReference type="GO" id="GO:0006520">
    <property type="term" value="P:amino acid metabolic process"/>
    <property type="evidence" value="ECO:0007669"/>
    <property type="project" value="InterPro"/>
</dbReference>
<dbReference type="FunFam" id="3.40.50.1370:FF:000006">
    <property type="entry name" value="Aspartate carbamoyltransferase"/>
    <property type="match status" value="1"/>
</dbReference>
<dbReference type="FunFam" id="3.40.50.1370:FF:000007">
    <property type="entry name" value="Aspartate carbamoyltransferase"/>
    <property type="match status" value="1"/>
</dbReference>
<dbReference type="Gene3D" id="3.40.50.1370">
    <property type="entry name" value="Aspartate/ornithine carbamoyltransferase"/>
    <property type="match status" value="2"/>
</dbReference>
<dbReference type="HAMAP" id="MF_00001">
    <property type="entry name" value="Asp_carb_tr"/>
    <property type="match status" value="1"/>
</dbReference>
<dbReference type="InterPro" id="IPR006132">
    <property type="entry name" value="Asp/Orn_carbamoyltranf_P-bd"/>
</dbReference>
<dbReference type="InterPro" id="IPR006130">
    <property type="entry name" value="Asp/Orn_carbamoylTrfase"/>
</dbReference>
<dbReference type="InterPro" id="IPR036901">
    <property type="entry name" value="Asp/Orn_carbamoylTrfase_sf"/>
</dbReference>
<dbReference type="InterPro" id="IPR002082">
    <property type="entry name" value="Asp_carbamoyltransf"/>
</dbReference>
<dbReference type="InterPro" id="IPR006131">
    <property type="entry name" value="Asp_carbamoyltransf_Asp/Orn-bd"/>
</dbReference>
<dbReference type="NCBIfam" id="TIGR00670">
    <property type="entry name" value="asp_carb_tr"/>
    <property type="match status" value="1"/>
</dbReference>
<dbReference type="NCBIfam" id="NF002032">
    <property type="entry name" value="PRK00856.1"/>
    <property type="match status" value="1"/>
</dbReference>
<dbReference type="PANTHER" id="PTHR45753:SF6">
    <property type="entry name" value="ASPARTATE CARBAMOYLTRANSFERASE"/>
    <property type="match status" value="1"/>
</dbReference>
<dbReference type="PANTHER" id="PTHR45753">
    <property type="entry name" value="ORNITHINE CARBAMOYLTRANSFERASE, MITOCHONDRIAL"/>
    <property type="match status" value="1"/>
</dbReference>
<dbReference type="Pfam" id="PF00185">
    <property type="entry name" value="OTCace"/>
    <property type="match status" value="1"/>
</dbReference>
<dbReference type="Pfam" id="PF02729">
    <property type="entry name" value="OTCace_N"/>
    <property type="match status" value="1"/>
</dbReference>
<dbReference type="PRINTS" id="PR00100">
    <property type="entry name" value="AOTCASE"/>
</dbReference>
<dbReference type="PRINTS" id="PR00101">
    <property type="entry name" value="ATCASE"/>
</dbReference>
<dbReference type="SUPFAM" id="SSF53671">
    <property type="entry name" value="Aspartate/ornithine carbamoyltransferase"/>
    <property type="match status" value="1"/>
</dbReference>
<dbReference type="PROSITE" id="PS00097">
    <property type="entry name" value="CARBAMOYLTRANSFERASE"/>
    <property type="match status" value="1"/>
</dbReference>
<evidence type="ECO:0000255" key="1">
    <source>
        <dbReference type="HAMAP-Rule" id="MF_00001"/>
    </source>
</evidence>
<evidence type="ECO:0000305" key="2"/>
<proteinExistence type="evidence at protein level"/>
<feature type="chain" id="PRO_0000113177" description="Aspartate carbamoyltransferase catalytic subunit">
    <location>
        <begin position="1"/>
        <end position="334"/>
    </location>
</feature>
<feature type="binding site" evidence="1">
    <location>
        <position position="71"/>
    </location>
    <ligand>
        <name>carbamoyl phosphate</name>
        <dbReference type="ChEBI" id="CHEBI:58228"/>
    </ligand>
</feature>
<feature type="binding site" evidence="1">
    <location>
        <position position="72"/>
    </location>
    <ligand>
        <name>carbamoyl phosphate</name>
        <dbReference type="ChEBI" id="CHEBI:58228"/>
    </ligand>
</feature>
<feature type="binding site" evidence="1">
    <location>
        <position position="99"/>
    </location>
    <ligand>
        <name>L-aspartate</name>
        <dbReference type="ChEBI" id="CHEBI:29991"/>
    </ligand>
</feature>
<feature type="binding site" evidence="1">
    <location>
        <position position="121"/>
    </location>
    <ligand>
        <name>carbamoyl phosphate</name>
        <dbReference type="ChEBI" id="CHEBI:58228"/>
    </ligand>
</feature>
<feature type="binding site" evidence="1">
    <location>
        <position position="151"/>
    </location>
    <ligand>
        <name>carbamoyl phosphate</name>
        <dbReference type="ChEBI" id="CHEBI:58228"/>
    </ligand>
</feature>
<feature type="binding site" evidence="1">
    <location>
        <position position="154"/>
    </location>
    <ligand>
        <name>carbamoyl phosphate</name>
        <dbReference type="ChEBI" id="CHEBI:58228"/>
    </ligand>
</feature>
<feature type="binding site" evidence="1">
    <location>
        <position position="184"/>
    </location>
    <ligand>
        <name>L-aspartate</name>
        <dbReference type="ChEBI" id="CHEBI:29991"/>
    </ligand>
</feature>
<feature type="binding site" evidence="1">
    <location>
        <position position="239"/>
    </location>
    <ligand>
        <name>L-aspartate</name>
        <dbReference type="ChEBI" id="CHEBI:29991"/>
    </ligand>
</feature>
<feature type="binding site" evidence="1">
    <location>
        <position position="280"/>
    </location>
    <ligand>
        <name>carbamoyl phosphate</name>
        <dbReference type="ChEBI" id="CHEBI:58228"/>
    </ligand>
</feature>
<feature type="binding site" evidence="1">
    <location>
        <position position="281"/>
    </location>
    <ligand>
        <name>carbamoyl phosphate</name>
        <dbReference type="ChEBI" id="CHEBI:58228"/>
    </ligand>
</feature>
<feature type="sequence conflict" description="In Ref. 2; AA sequence." evidence="2" ref="2">
    <original>T</original>
    <variation>A</variation>
    <location>
        <position position="6"/>
    </location>
</feature>
<feature type="sequence conflict" description="In Ref. 2; AA sequence." evidence="2" ref="2">
    <original>D</original>
    <variation>A</variation>
    <location>
        <position position="14"/>
    </location>
</feature>
<comment type="function">
    <text evidence="1">Catalyzes the condensation of carbamoyl phosphate and aspartate to form carbamoyl aspartate and inorganic phosphate, the committed step in the de novo pyrimidine nucleotide biosynthesis pathway.</text>
</comment>
<comment type="catalytic activity">
    <reaction evidence="1">
        <text>carbamoyl phosphate + L-aspartate = N-carbamoyl-L-aspartate + phosphate + H(+)</text>
        <dbReference type="Rhea" id="RHEA:20013"/>
        <dbReference type="ChEBI" id="CHEBI:15378"/>
        <dbReference type="ChEBI" id="CHEBI:29991"/>
        <dbReference type="ChEBI" id="CHEBI:32814"/>
        <dbReference type="ChEBI" id="CHEBI:43474"/>
        <dbReference type="ChEBI" id="CHEBI:58228"/>
        <dbReference type="EC" id="2.1.3.2"/>
    </reaction>
</comment>
<comment type="pathway">
    <text evidence="1">Pyrimidine metabolism; UMP biosynthesis via de novo pathway; (S)-dihydroorotate from bicarbonate: step 2/3.</text>
</comment>
<comment type="subunit">
    <text evidence="1">Heterododecamer (2C3:3R2) of six catalytic PyrB chains organized as two trimers (C3), and six regulatory PyrI chains organized as three dimers (R2).</text>
</comment>
<comment type="similarity">
    <text evidence="1 2">Belongs to the aspartate/ornithine carbamoyltransferase superfamily. ATCase family.</text>
</comment>
<accession>P56585</accession>
<accession>Q9F4I6</accession>
<sequence length="334" mass="36463">MTPLETKRPLQLNDQGQLQHFLSLDGLRRELLTEILDTADSFLEVGARAVKKVPLLRGKTVCNVFFENSTRTRTTFELAAQRLSADVITLNVSTSSASKGETLLDTLRNLEAMAADMFVVRHGDSGAAHFIAEHVCPQVAIINGGDGRHAHPTQGMLDMLTIRRHKGSFENLSVAIVGDILHSRVARSNMLALKTLGCPDIRVIAPKTLLPIGVEQYGVKVYTDMTEGLKDVDVVIMLRLQRERMTGGLLPSEGEFYRLFGLTTARLAGAKPDAIVMHPGPINRGVEIESAVADGPHSVILNQVTYGIAIRMAVLSMAMSGQTAQRQFDQENAQ</sequence>
<keyword id="KW-0903">Direct protein sequencing</keyword>
<keyword id="KW-0665">Pyrimidine biosynthesis</keyword>
<keyword id="KW-0808">Transferase</keyword>
<reference key="1">
    <citation type="submission" date="2000-08" db="EMBL/GenBank/DDBJ databases">
        <title>The regulatory protein PyrR of Pseudomona fluorescens is required for competitive root colonization.</title>
        <authorList>
            <person name="Camacho-Carvajal M.M."/>
            <person name="Scheublin T."/>
            <person name="Lugtenberg B.J.J."/>
            <person name="Bloemberg G.V."/>
        </authorList>
    </citation>
    <scope>NUCLEOTIDE SEQUENCE [GENOMIC DNA]</scope>
    <source>
        <strain>WCS365</strain>
    </source>
</reference>
<reference key="2">
    <citation type="journal article" date="1993" name="Proc. Natl. Acad. Sci. U.S.A.">
        <title>Subunit structure of a class A aspartate transcarbamoylase from Pseudomonas fluorescens.</title>
        <authorList>
            <person name="Bergh S.T."/>
            <person name="Evans D.R."/>
        </authorList>
    </citation>
    <scope>PROTEIN SEQUENCE OF 1-19</scope>
    <source>
        <strain>ATCC 13525 / DSM 50090 / JCM 5963 / NBRC 14160 / NCIMB 9046 / NCTC 10038 / VKM B-894</strain>
    </source>
</reference>
<name>PYRB_PSEFA</name>
<gene>
    <name evidence="1" type="primary">pyrB</name>
</gene>
<protein>
    <recommendedName>
        <fullName evidence="1">Aspartate carbamoyltransferase catalytic subunit</fullName>
        <ecNumber evidence="1">2.1.3.2</ecNumber>
    </recommendedName>
    <alternativeName>
        <fullName evidence="1">Aspartate transcarbamylase</fullName>
        <shortName evidence="1">ATCase</shortName>
    </alternativeName>
</protein>